<reference key="1">
    <citation type="journal article" date="2002" name="Gene">
        <title>Identification, genomic organization and mRNA expression of CRELD1, the founding member of a unique family of matricellular proteins.</title>
        <authorList>
            <person name="Rupp P.A."/>
            <person name="Fouad G.T."/>
            <person name="Egelston C.A."/>
            <person name="Reifsteck C.A."/>
            <person name="Olson S.B."/>
            <person name="Knosp W.M."/>
            <person name="Glanville R.W."/>
            <person name="Thornburg K.L."/>
            <person name="Robinson S.W."/>
            <person name="Maslen C.L."/>
        </authorList>
    </citation>
    <scope>NUCLEOTIDE SEQUENCE [MRNA] (ISOFORM 1)</scope>
    <scope>TISSUE SPECIFICITY</scope>
    <scope>VARIANT VAL-13</scope>
    <source>
        <tissue>Fibroblast</tissue>
    </source>
</reference>
<reference key="2">
    <citation type="journal article" date="2001" name="Genome Res.">
        <title>Towards a catalog of human genes and proteins: sequencing and analysis of 500 novel complete protein coding human cDNAs.</title>
        <authorList>
            <person name="Wiemann S."/>
            <person name="Weil B."/>
            <person name="Wellenreuther R."/>
            <person name="Gassenhuber J."/>
            <person name="Glassl S."/>
            <person name="Ansorge W."/>
            <person name="Boecher M."/>
            <person name="Bloecker H."/>
            <person name="Bauersachs S."/>
            <person name="Blum H."/>
            <person name="Lauber J."/>
            <person name="Duesterhoeft A."/>
            <person name="Beyer A."/>
            <person name="Koehrer K."/>
            <person name="Strack N."/>
            <person name="Mewes H.-W."/>
            <person name="Ottenwaelder B."/>
            <person name="Obermaier B."/>
            <person name="Tampe J."/>
            <person name="Heubner D."/>
            <person name="Wambutt R."/>
            <person name="Korn B."/>
            <person name="Klein M."/>
            <person name="Poustka A."/>
        </authorList>
    </citation>
    <scope>NUCLEOTIDE SEQUENCE [LARGE SCALE MRNA] (ISOFORM 1)</scope>
    <scope>VARIANT VAL-13</scope>
    <source>
        <tissue>Kidney</tissue>
    </source>
</reference>
<reference key="3">
    <citation type="journal article" date="2003" name="Genome Res.">
        <title>The secreted protein discovery initiative (SPDI), a large-scale effort to identify novel human secreted and transmembrane proteins: a bioinformatics assessment.</title>
        <authorList>
            <person name="Clark H.F."/>
            <person name="Gurney A.L."/>
            <person name="Abaya E."/>
            <person name="Baker K."/>
            <person name="Baldwin D.T."/>
            <person name="Brush J."/>
            <person name="Chen J."/>
            <person name="Chow B."/>
            <person name="Chui C."/>
            <person name="Crowley C."/>
            <person name="Currell B."/>
            <person name="Deuel B."/>
            <person name="Dowd P."/>
            <person name="Eaton D."/>
            <person name="Foster J.S."/>
            <person name="Grimaldi C."/>
            <person name="Gu Q."/>
            <person name="Hass P.E."/>
            <person name="Heldens S."/>
            <person name="Huang A."/>
            <person name="Kim H.S."/>
            <person name="Klimowski L."/>
            <person name="Jin Y."/>
            <person name="Johnson S."/>
            <person name="Lee J."/>
            <person name="Lewis L."/>
            <person name="Liao D."/>
            <person name="Mark M.R."/>
            <person name="Robbie E."/>
            <person name="Sanchez C."/>
            <person name="Schoenfeld J."/>
            <person name="Seshagiri S."/>
            <person name="Simmons L."/>
            <person name="Singh J."/>
            <person name="Smith V."/>
            <person name="Stinson J."/>
            <person name="Vagts A."/>
            <person name="Vandlen R.L."/>
            <person name="Watanabe C."/>
            <person name="Wieand D."/>
            <person name="Woods K."/>
            <person name="Xie M.-H."/>
            <person name="Yansura D.G."/>
            <person name="Yi S."/>
            <person name="Yu G."/>
            <person name="Yuan J."/>
            <person name="Zhang M."/>
            <person name="Zhang Z."/>
            <person name="Goddard A.D."/>
            <person name="Wood W.I."/>
            <person name="Godowski P.J."/>
            <person name="Gray A.M."/>
        </authorList>
    </citation>
    <scope>NUCLEOTIDE SEQUENCE [LARGE SCALE MRNA] (ISOFORM 1)</scope>
    <scope>VARIANT VAL-13</scope>
</reference>
<reference key="4">
    <citation type="journal article" date="2004" name="Nat. Genet.">
        <title>Complete sequencing and characterization of 21,243 full-length human cDNAs.</title>
        <authorList>
            <person name="Ota T."/>
            <person name="Suzuki Y."/>
            <person name="Nishikawa T."/>
            <person name="Otsuki T."/>
            <person name="Sugiyama T."/>
            <person name="Irie R."/>
            <person name="Wakamatsu A."/>
            <person name="Hayashi K."/>
            <person name="Sato H."/>
            <person name="Nagai K."/>
            <person name="Kimura K."/>
            <person name="Makita H."/>
            <person name="Sekine M."/>
            <person name="Obayashi M."/>
            <person name="Nishi T."/>
            <person name="Shibahara T."/>
            <person name="Tanaka T."/>
            <person name="Ishii S."/>
            <person name="Yamamoto J."/>
            <person name="Saito K."/>
            <person name="Kawai Y."/>
            <person name="Isono Y."/>
            <person name="Nakamura Y."/>
            <person name="Nagahari K."/>
            <person name="Murakami K."/>
            <person name="Yasuda T."/>
            <person name="Iwayanagi T."/>
            <person name="Wagatsuma M."/>
            <person name="Shiratori A."/>
            <person name="Sudo H."/>
            <person name="Hosoiri T."/>
            <person name="Kaku Y."/>
            <person name="Kodaira H."/>
            <person name="Kondo H."/>
            <person name="Sugawara M."/>
            <person name="Takahashi M."/>
            <person name="Kanda K."/>
            <person name="Yokoi T."/>
            <person name="Furuya T."/>
            <person name="Kikkawa E."/>
            <person name="Omura Y."/>
            <person name="Abe K."/>
            <person name="Kamihara K."/>
            <person name="Katsuta N."/>
            <person name="Sato K."/>
            <person name="Tanikawa M."/>
            <person name="Yamazaki M."/>
            <person name="Ninomiya K."/>
            <person name="Ishibashi T."/>
            <person name="Yamashita H."/>
            <person name="Murakawa K."/>
            <person name="Fujimori K."/>
            <person name="Tanai H."/>
            <person name="Kimata M."/>
            <person name="Watanabe M."/>
            <person name="Hiraoka S."/>
            <person name="Chiba Y."/>
            <person name="Ishida S."/>
            <person name="Ono Y."/>
            <person name="Takiguchi S."/>
            <person name="Watanabe S."/>
            <person name="Yosida M."/>
            <person name="Hotuta T."/>
            <person name="Kusano J."/>
            <person name="Kanehori K."/>
            <person name="Takahashi-Fujii A."/>
            <person name="Hara H."/>
            <person name="Tanase T.-O."/>
            <person name="Nomura Y."/>
            <person name="Togiya S."/>
            <person name="Komai F."/>
            <person name="Hara R."/>
            <person name="Takeuchi K."/>
            <person name="Arita M."/>
            <person name="Imose N."/>
            <person name="Musashino K."/>
            <person name="Yuuki H."/>
            <person name="Oshima A."/>
            <person name="Sasaki N."/>
            <person name="Aotsuka S."/>
            <person name="Yoshikawa Y."/>
            <person name="Matsunawa H."/>
            <person name="Ichihara T."/>
            <person name="Shiohata N."/>
            <person name="Sano S."/>
            <person name="Moriya S."/>
            <person name="Momiyama H."/>
            <person name="Satoh N."/>
            <person name="Takami S."/>
            <person name="Terashima Y."/>
            <person name="Suzuki O."/>
            <person name="Nakagawa S."/>
            <person name="Senoh A."/>
            <person name="Mizoguchi H."/>
            <person name="Goto Y."/>
            <person name="Shimizu F."/>
            <person name="Wakebe H."/>
            <person name="Hishigaki H."/>
            <person name="Watanabe T."/>
            <person name="Sugiyama A."/>
            <person name="Takemoto M."/>
            <person name="Kawakami B."/>
            <person name="Yamazaki M."/>
            <person name="Watanabe K."/>
            <person name="Kumagai A."/>
            <person name="Itakura S."/>
            <person name="Fukuzumi Y."/>
            <person name="Fujimori Y."/>
            <person name="Komiyama M."/>
            <person name="Tashiro H."/>
            <person name="Tanigami A."/>
            <person name="Fujiwara T."/>
            <person name="Ono T."/>
            <person name="Yamada K."/>
            <person name="Fujii Y."/>
            <person name="Ozaki K."/>
            <person name="Hirao M."/>
            <person name="Ohmori Y."/>
            <person name="Kawabata A."/>
            <person name="Hikiji T."/>
            <person name="Kobatake N."/>
            <person name="Inagaki H."/>
            <person name="Ikema Y."/>
            <person name="Okamoto S."/>
            <person name="Okitani R."/>
            <person name="Kawakami T."/>
            <person name="Noguchi S."/>
            <person name="Itoh T."/>
            <person name="Shigeta K."/>
            <person name="Senba T."/>
            <person name="Matsumura K."/>
            <person name="Nakajima Y."/>
            <person name="Mizuno T."/>
            <person name="Morinaga M."/>
            <person name="Sasaki M."/>
            <person name="Togashi T."/>
            <person name="Oyama M."/>
            <person name="Hata H."/>
            <person name="Watanabe M."/>
            <person name="Komatsu T."/>
            <person name="Mizushima-Sugano J."/>
            <person name="Satoh T."/>
            <person name="Shirai Y."/>
            <person name="Takahashi Y."/>
            <person name="Nakagawa K."/>
            <person name="Okumura K."/>
            <person name="Nagase T."/>
            <person name="Nomura N."/>
            <person name="Kikuchi H."/>
            <person name="Masuho Y."/>
            <person name="Yamashita R."/>
            <person name="Nakai K."/>
            <person name="Yada T."/>
            <person name="Nakamura Y."/>
            <person name="Ohara O."/>
            <person name="Isogai T."/>
            <person name="Sugano S."/>
        </authorList>
    </citation>
    <scope>NUCLEOTIDE SEQUENCE [LARGE SCALE MRNA] (ISOFORM 1)</scope>
    <scope>VARIANT VAL-13</scope>
    <source>
        <tissue>Amygdala</tissue>
    </source>
</reference>
<reference key="5">
    <citation type="submission" date="2004-06" db="EMBL/GenBank/DDBJ databases">
        <title>Cloning of human full open reading frames in Gateway(TM) system entry vector (pDONR201).</title>
        <authorList>
            <person name="Ebert L."/>
            <person name="Schick M."/>
            <person name="Neubert P."/>
            <person name="Schatten R."/>
            <person name="Henze S."/>
            <person name="Korn B."/>
        </authorList>
    </citation>
    <scope>NUCLEOTIDE SEQUENCE [LARGE SCALE MRNA] (ISOFORM 2)</scope>
    <scope>VARIANT VAL-13</scope>
</reference>
<reference key="6">
    <citation type="journal article" date="2006" name="Nature">
        <title>The DNA sequence, annotation and analysis of human chromosome 3.</title>
        <authorList>
            <person name="Muzny D.M."/>
            <person name="Scherer S.E."/>
            <person name="Kaul R."/>
            <person name="Wang J."/>
            <person name="Yu J."/>
            <person name="Sudbrak R."/>
            <person name="Buhay C.J."/>
            <person name="Chen R."/>
            <person name="Cree A."/>
            <person name="Ding Y."/>
            <person name="Dugan-Rocha S."/>
            <person name="Gill R."/>
            <person name="Gunaratne P."/>
            <person name="Harris R.A."/>
            <person name="Hawes A.C."/>
            <person name="Hernandez J."/>
            <person name="Hodgson A.V."/>
            <person name="Hume J."/>
            <person name="Jackson A."/>
            <person name="Khan Z.M."/>
            <person name="Kovar-Smith C."/>
            <person name="Lewis L.R."/>
            <person name="Lozado R.J."/>
            <person name="Metzker M.L."/>
            <person name="Milosavljevic A."/>
            <person name="Miner G.R."/>
            <person name="Morgan M.B."/>
            <person name="Nazareth L.V."/>
            <person name="Scott G."/>
            <person name="Sodergren E."/>
            <person name="Song X.-Z."/>
            <person name="Steffen D."/>
            <person name="Wei S."/>
            <person name="Wheeler D.A."/>
            <person name="Wright M.W."/>
            <person name="Worley K.C."/>
            <person name="Yuan Y."/>
            <person name="Zhang Z."/>
            <person name="Adams C.Q."/>
            <person name="Ansari-Lari M.A."/>
            <person name="Ayele M."/>
            <person name="Brown M.J."/>
            <person name="Chen G."/>
            <person name="Chen Z."/>
            <person name="Clendenning J."/>
            <person name="Clerc-Blankenburg K.P."/>
            <person name="Chen R."/>
            <person name="Chen Z."/>
            <person name="Davis C."/>
            <person name="Delgado O."/>
            <person name="Dinh H.H."/>
            <person name="Dong W."/>
            <person name="Draper H."/>
            <person name="Ernst S."/>
            <person name="Fu G."/>
            <person name="Gonzalez-Garay M.L."/>
            <person name="Garcia D.K."/>
            <person name="Gillett W."/>
            <person name="Gu J."/>
            <person name="Hao B."/>
            <person name="Haugen E."/>
            <person name="Havlak P."/>
            <person name="He X."/>
            <person name="Hennig S."/>
            <person name="Hu S."/>
            <person name="Huang W."/>
            <person name="Jackson L.R."/>
            <person name="Jacob L.S."/>
            <person name="Kelly S.H."/>
            <person name="Kube M."/>
            <person name="Levy R."/>
            <person name="Li Z."/>
            <person name="Liu B."/>
            <person name="Liu J."/>
            <person name="Liu W."/>
            <person name="Lu J."/>
            <person name="Maheshwari M."/>
            <person name="Nguyen B.-V."/>
            <person name="Okwuonu G.O."/>
            <person name="Palmeiri A."/>
            <person name="Pasternak S."/>
            <person name="Perez L.M."/>
            <person name="Phelps K.A."/>
            <person name="Plopper F.J."/>
            <person name="Qiang B."/>
            <person name="Raymond C."/>
            <person name="Rodriguez R."/>
            <person name="Saenphimmachak C."/>
            <person name="Santibanez J."/>
            <person name="Shen H."/>
            <person name="Shen Y."/>
            <person name="Subramanian S."/>
            <person name="Tabor P.E."/>
            <person name="Verduzco D."/>
            <person name="Waldron L."/>
            <person name="Wang J."/>
            <person name="Wang J."/>
            <person name="Wang Q."/>
            <person name="Williams G.A."/>
            <person name="Wong G.K.-S."/>
            <person name="Yao Z."/>
            <person name="Zhang J."/>
            <person name="Zhang X."/>
            <person name="Zhao G."/>
            <person name="Zhou J."/>
            <person name="Zhou Y."/>
            <person name="Nelson D."/>
            <person name="Lehrach H."/>
            <person name="Reinhardt R."/>
            <person name="Naylor S.L."/>
            <person name="Yang H."/>
            <person name="Olson M."/>
            <person name="Weinstock G."/>
            <person name="Gibbs R.A."/>
        </authorList>
    </citation>
    <scope>NUCLEOTIDE SEQUENCE [LARGE SCALE GENOMIC DNA]</scope>
</reference>
<reference key="7">
    <citation type="journal article" date="2004" name="Genome Res.">
        <title>The status, quality, and expansion of the NIH full-length cDNA project: the Mammalian Gene Collection (MGC).</title>
        <authorList>
            <consortium name="The MGC Project Team"/>
        </authorList>
    </citation>
    <scope>NUCLEOTIDE SEQUENCE [LARGE SCALE MRNA] (ISOFORM 2)</scope>
    <scope>VARIANT VAL-13</scope>
    <source>
        <tissue>Lung</tissue>
    </source>
</reference>
<reference key="8">
    <citation type="journal article" date="2012" name="J. Biol. Chem.">
        <title>Hyperactivity of the Ero1alpha oxidase elicits endoplasmic reticulum stress but no broad antioxidant response.</title>
        <authorList>
            <person name="Hansen H.G."/>
            <person name="Schmidt J.D."/>
            <person name="Soltoft C.L."/>
            <person name="Ramming T."/>
            <person name="Geertz-Hansen H.M."/>
            <person name="Christensen B."/>
            <person name="Sorensen E.S."/>
            <person name="Juncker A.S."/>
            <person name="Appenzeller-Herzog C."/>
            <person name="Ellgaard L."/>
        </authorList>
    </citation>
    <scope>INDUCTION</scope>
</reference>
<reference key="9">
    <citation type="journal article" date="2003" name="Am. J. Hum. Genet.">
        <title>Missense mutations in CRELD1 are associated with cardiac atrioventricular septal defects.</title>
        <authorList>
            <person name="Robinson S.W."/>
            <person name="Morris C.D."/>
            <person name="Goldmuntz E."/>
            <person name="Reller M.D."/>
            <person name="Jones M.A."/>
            <person name="Steiner R.D."/>
            <person name="Maslen C.L."/>
        </authorList>
    </citation>
    <scope>VARIANTS AVSD2 HIS-107; ILE-311 AND CYS-329</scope>
</reference>
<reference key="10">
    <citation type="journal article" date="2005" name="Clin. Genet.">
        <title>Analysis of CRELD1 as a candidate 3p25 atrioventicular septal defect locus (AVSD2).</title>
        <authorList>
            <person name="Zatyka M."/>
            <person name="Priestley M."/>
            <person name="Ladusans E.J."/>
            <person name="Fryer A.E."/>
            <person name="Mason J."/>
            <person name="Latif F."/>
            <person name="Maher E.R."/>
        </authorList>
    </citation>
    <scope>VARIANT AVSD2 ALA-162</scope>
</reference>
<reference key="11">
    <citation type="journal article" date="2024" name="Genet. Med.">
        <title>Biallelic CRELD1 variants cause a multisystem syndrome, including neurodevelopmental phenotypes, cardiac dysrhythmias, and frequent infections.</title>
        <authorList>
            <person name="Jeffries L."/>
            <person name="Mis E.K."/>
            <person name="McWalter K."/>
            <person name="Donkervoort S."/>
            <person name="Brodsky N.N."/>
            <person name="Carpier J.M."/>
            <person name="Ji W."/>
            <person name="Ionita C."/>
            <person name="Roy B."/>
            <person name="Morrow J.S."/>
            <person name="Darbinyan A."/>
            <person name="Iyer K."/>
            <person name="Aul R.B."/>
            <person name="Banka S."/>
            <person name="Chao K.R."/>
            <person name="Cobbold L."/>
            <person name="Cohen S."/>
            <person name="Custodio H.M."/>
            <person name="Drummond-Borg M."/>
            <person name="Elmslie F."/>
            <person name="Finanger E."/>
            <person name="Hainline B.E."/>
            <person name="Helbig I."/>
            <person name="Hewson S."/>
            <person name="Hu Y."/>
            <person name="Jackson A."/>
            <person name="Josifova D."/>
            <person name="Konstantino M."/>
            <person name="Leach M.E."/>
            <person name="Mak B."/>
            <person name="McCormick D."/>
            <person name="McGee E."/>
            <person name="Nelson S."/>
            <person name="Nguyen J."/>
            <person name="Nugent K."/>
            <person name="Ortega L."/>
            <person name="Goodkin H.P."/>
            <person name="Roeder E."/>
            <person name="Roy S."/>
            <person name="Sapp K."/>
            <person name="Saade D."/>
            <person name="Sisodiya S.M."/>
            <person name="Stals K."/>
            <person name="Towner S."/>
            <person name="Wilson W."/>
            <person name="Khokha M.K."/>
            <person name="Boennemann C.G."/>
            <person name="Lucas C.L."/>
            <person name="Lakhani S.A."/>
        </authorList>
    </citation>
    <scope>INVOLVEMENT IN JELANS</scope>
    <scope>VARIANTS JELANS TYR-192; ARG-262; VAL-369; MET-380; ASN-386 AND PRO-391</scope>
</reference>
<feature type="signal peptide" evidence="4">
    <location>
        <begin position="1"/>
        <end position="29"/>
    </location>
</feature>
<feature type="chain" id="PRO_0000042781" description="Protein disulfide isomerase CRELD1">
    <location>
        <begin position="30"/>
        <end position="420"/>
    </location>
</feature>
<feature type="topological domain" description="Extracellular" evidence="4">
    <location>
        <begin position="30"/>
        <end position="362"/>
    </location>
</feature>
<feature type="transmembrane region" description="Helical" evidence="4">
    <location>
        <begin position="363"/>
        <end position="383"/>
    </location>
</feature>
<feature type="topological domain" description="Cytoplasmic" evidence="4">
    <location>
        <position position="384"/>
    </location>
</feature>
<feature type="transmembrane region" description="Helical" evidence="4">
    <location>
        <begin position="385"/>
        <end position="405"/>
    </location>
</feature>
<feature type="topological domain" description="Extracellular" evidence="4">
    <location>
        <begin position="406"/>
        <end position="420"/>
    </location>
</feature>
<feature type="domain" description="EGF-like 1" evidence="5">
    <location>
        <begin position="153"/>
        <end position="193"/>
    </location>
</feature>
<feature type="repeat" description="FU 1">
    <location>
        <begin position="208"/>
        <end position="256"/>
    </location>
</feature>
<feature type="repeat" description="FU 2">
    <location>
        <begin position="268"/>
        <end position="315"/>
    </location>
</feature>
<feature type="domain" description="EGF-like 2; calcium-binding" evidence="5">
    <location>
        <begin position="305"/>
        <end position="344"/>
    </location>
</feature>
<feature type="short sequence motif" description="CXXC" evidence="1">
    <location>
        <begin position="46"/>
        <end position="49"/>
    </location>
</feature>
<feature type="short sequence motif" description="CXXC" evidence="3">
    <location>
        <begin position="278"/>
        <end position="281"/>
    </location>
</feature>
<feature type="glycosylation site" description="N-linked (GlcNAc...) asparagine" evidence="4">
    <location>
        <position position="79"/>
    </location>
</feature>
<feature type="glycosylation site" description="N-linked (GlcNAc...) asparagine" evidence="4">
    <location>
        <position position="205"/>
    </location>
</feature>
<feature type="disulfide bond" description="Redox-active" evidence="3">
    <location>
        <begin position="46"/>
        <end position="49"/>
    </location>
</feature>
<feature type="disulfide bond" evidence="5">
    <location>
        <begin position="155"/>
        <end position="169"/>
    </location>
</feature>
<feature type="disulfide bond" evidence="5">
    <location>
        <begin position="163"/>
        <end position="181"/>
    </location>
</feature>
<feature type="disulfide bond" evidence="5">
    <location>
        <begin position="183"/>
        <end position="192"/>
    </location>
</feature>
<feature type="disulfide bond" description="Redox-active" evidence="3">
    <location>
        <begin position="278"/>
        <end position="281"/>
    </location>
</feature>
<feature type="disulfide bond" evidence="5">
    <location>
        <begin position="309"/>
        <end position="321"/>
    </location>
</feature>
<feature type="disulfide bond" evidence="5">
    <location>
        <begin position="314"/>
        <end position="330"/>
    </location>
</feature>
<feature type="disulfide bond" evidence="5">
    <location>
        <begin position="332"/>
        <end position="343"/>
    </location>
</feature>
<feature type="splice variant" id="VSP_016091" description="In isoform 2." evidence="16 17">
    <original>ESAGFFSEMTEDELVVLQQMFFGIIICALATLAAKGDLVFTAIFIGAVAAMTGYWLSERSDRVLEGFIKGR</original>
    <variation>GAFPILTDLTPETTRRWKLGSHPHSTYVKMKMQRDEATFPGLYGKQVAKLGSQSRQSDRGTRLIHSQQASSQR</variation>
    <location>
        <begin position="350"/>
        <end position="420"/>
    </location>
</feature>
<feature type="sequence variant" id="VAR_046653" description="In dbSNP:rs279552." evidence="6 7 9 10 11 15">
    <original>M</original>
    <variation>V</variation>
    <location>
        <position position="13"/>
    </location>
</feature>
<feature type="sequence variant" id="VAR_023764" description="In AVSD2; associated with disease susceptibility; dbSNP:rs28941780." evidence="8">
    <original>R</original>
    <variation>H</variation>
    <location>
        <position position="107"/>
    </location>
</feature>
<feature type="sequence variant" id="VAR_046654" description="In dbSNP:rs2302787.">
    <original>P</original>
    <variation>R</variation>
    <location>
        <position position="128"/>
    </location>
</feature>
<feature type="sequence variant" id="VAR_023765" description="In AVSD2; associated with disease susceptibility; dbSNP:rs121912626." evidence="12">
    <original>P</original>
    <variation>A</variation>
    <location>
        <position position="162"/>
    </location>
</feature>
<feature type="sequence variant" id="VAR_089488" description="In JELANS; pathogenic." evidence="14">
    <original>C</original>
    <variation>Y</variation>
    <location>
        <position position="192"/>
    </location>
</feature>
<feature type="sequence variant" id="VAR_089489" description="In JELANS; likely pathogenic." evidence="14">
    <original>C</original>
    <variation>R</variation>
    <location>
        <position position="262"/>
    </location>
</feature>
<feature type="sequence variant" id="VAR_023766" description="In AVSD2; associated with disease susceptibility; dbSNP:rs28942092." evidence="8">
    <original>T</original>
    <variation>I</variation>
    <location>
        <position position="311"/>
    </location>
</feature>
<feature type="sequence variant" id="VAR_023767" description="In AVSD2; associated with disease susceptibility; dbSNP:rs28942091." evidence="8">
    <original>R</original>
    <variation>C</variation>
    <location>
        <position position="329"/>
    </location>
</feature>
<feature type="sequence variant" id="VAR_089490" description="In JELANS; uncertain significance." evidence="14">
    <original>M</original>
    <variation>V</variation>
    <location>
        <position position="369"/>
    </location>
</feature>
<feature type="sequence variant" id="VAR_089491" description="In JELANS; uncertain significance." evidence="14">
    <original>T</original>
    <variation>M</variation>
    <location>
        <position position="380"/>
    </location>
</feature>
<feature type="sequence variant" id="VAR_089492" description="In JELANS; uncertain significance." evidence="14">
    <original>D</original>
    <variation>N</variation>
    <location>
        <position position="386"/>
    </location>
</feature>
<feature type="sequence variant" id="VAR_089493" description="In JELANS; uncertain significance." evidence="14">
    <original>A</original>
    <variation>P</variation>
    <location>
        <position position="391"/>
    </location>
</feature>
<feature type="sequence conflict" description="In Ref. 2; CAB43376." evidence="18" ref="2">
    <original>E</original>
    <variation>G</variation>
    <location>
        <position position="126"/>
    </location>
</feature>
<feature type="sequence conflict" description="In Ref. 5; CAG33661." evidence="18" ref="5">
    <original>L</original>
    <variation>P</variation>
    <location>
        <position position="153"/>
    </location>
</feature>
<feature type="sequence conflict" description="In Ref. 4; BAG36806." evidence="18" ref="4">
    <original>G</original>
    <variation>S</variation>
    <location>
        <position position="186"/>
    </location>
</feature>
<feature type="sequence conflict" description="In Ref. 5; CAG33661." evidence="18" ref="5">
    <original>C</original>
    <variation>R</variation>
    <location>
        <position position="229"/>
    </location>
</feature>
<feature type="sequence conflict" description="In Ref. 2; CAB43376." evidence="18" ref="2">
    <original>Y</original>
    <variation>C</variation>
    <location>
        <position position="336"/>
    </location>
</feature>
<feature type="sequence conflict" description="In Ref. 4; BAG36806." evidence="18" ref="4">
    <original>I</original>
    <variation>V</variation>
    <location>
        <position position="348"/>
    </location>
</feature>
<comment type="function">
    <text evidence="2 3">Protein disulfide isomerase (By similarity). Promotes the localization of acetylcholine receptors (AChRs) to the plasma membrane (By similarity).</text>
</comment>
<comment type="catalytic activity">
    <reaction evidence="3">
        <text>Catalyzes the rearrangement of -S-S- bonds in proteins.</text>
        <dbReference type="EC" id="5.3.4.1"/>
    </reaction>
</comment>
<comment type="interaction">
    <interactant intactId="EBI-713009">
        <id>Q96HD1</id>
    </interactant>
    <interactant intactId="EBI-21288891">
        <id>P35348-1</id>
        <label>ADRA1A</label>
    </interactant>
    <organismsDiffer>false</organismsDiffer>
    <experiments>3</experiments>
</comment>
<comment type="interaction">
    <interactant intactId="EBI-21536433">
        <id>Q96HD1-2</id>
    </interactant>
    <interactant intactId="EBI-1055254">
        <id>Q8WXH2</id>
        <label>JPH3</label>
    </interactant>
    <organismsDiffer>false</organismsDiffer>
    <experiments>3</experiments>
</comment>
<comment type="interaction">
    <interactant intactId="EBI-21536433">
        <id>Q96HD1-2</id>
    </interactant>
    <interactant intactId="EBI-713665">
        <id>P19404</id>
        <label>NDUFV2</label>
    </interactant>
    <organismsDiffer>false</organismsDiffer>
    <experiments>3</experiments>
</comment>
<comment type="subcellular location">
    <subcellularLocation>
        <location evidence="18">Membrane</location>
        <topology evidence="18">Multi-pass membrane protein</topology>
    </subcellularLocation>
</comment>
<comment type="alternative products">
    <event type="alternative splicing"/>
    <isoform>
        <id>Q96HD1-1</id>
        <name>1</name>
        <sequence type="displayed"/>
    </isoform>
    <isoform>
        <id>Q96HD1-2</id>
        <name>2</name>
        <sequence type="described" ref="VSP_016091"/>
    </isoform>
    <text>Additional isoforms seem to exist.</text>
</comment>
<comment type="tissue specificity">
    <text evidence="7">Highly expressed in fetal lung, liver, kidney, adult heart, brain and skeletal muscle. Weakly expressed in placenta, fetal brain, and adult lung, liver, kidney and pancreas.</text>
</comment>
<comment type="induction">
    <text evidence="13">Up-regulated by inducers of the unfolded protein response (UPR), including tunicamycin and thapsigargin.</text>
</comment>
<comment type="disease" evidence="8 12">
    <disease id="DI-01195">
        <name>Atrioventricular septal defect 2</name>
        <acronym>AVSD2</acronym>
        <description>A congenital heart malformation characterized by a common atrioventricular junction coexisting with deficient atrioventricular septation. The complete form involves underdevelopment of the lower part of the atrial septum and the upper part of the ventricular septum; the valve itself is also shared. A less severe form, known as ostium primum atrial septal defect, is characterized by separate atrioventricular valvar orifices despite a common junction.</description>
        <dbReference type="MIM" id="606217"/>
    </disease>
    <text>Disease susceptibility is associated with variants affecting the gene represented in this entry.</text>
</comment>
<comment type="disease" evidence="14">
    <disease id="DI-06870">
        <name>Jeffries-Lakhani neurodevelopmental syndrome</name>
        <acronym>JELANS</acronym>
        <description>An autosomal recessive neurodevelopmental disorder characterized by developmental delay, early-onset epilepsy, and hypotonia apparent from infancy. Clinical features include motor delay, speech delay, and impaired intellectual development. About half of patients are non-ambulatory and/or non-verbal. Some patients have cardiac rhythm disturbances, and some experience recurrent infections. Premature death due to cardiac arrhythmia or epilepsy may occur.</description>
        <dbReference type="MIM" id="620771"/>
    </disease>
    <text>The disease is caused by variants affecting the gene represented in this entry.</text>
</comment>
<comment type="similarity">
    <text evidence="18">Belongs to the CRELD family.</text>
</comment>
<dbReference type="EC" id="5.3.4.1" evidence="3"/>
<dbReference type="EMBL" id="AF452623">
    <property type="protein sequence ID" value="AAM75206.1"/>
    <property type="molecule type" value="mRNA"/>
</dbReference>
<dbReference type="EMBL" id="AL050275">
    <property type="protein sequence ID" value="CAB43376.1"/>
    <property type="molecule type" value="mRNA"/>
</dbReference>
<dbReference type="EMBL" id="AY358363">
    <property type="protein sequence ID" value="AAQ88729.1"/>
    <property type="molecule type" value="mRNA"/>
</dbReference>
<dbReference type="EMBL" id="AK314113">
    <property type="protein sequence ID" value="BAG36806.1"/>
    <property type="molecule type" value="mRNA"/>
</dbReference>
<dbReference type="EMBL" id="CR457380">
    <property type="protein sequence ID" value="CAG33661.1"/>
    <property type="molecule type" value="mRNA"/>
</dbReference>
<dbReference type="EMBL" id="AC018809">
    <property type="status" value="NOT_ANNOTATED_CDS"/>
    <property type="molecule type" value="Genomic_DNA"/>
</dbReference>
<dbReference type="EMBL" id="BC008720">
    <property type="protein sequence ID" value="AAH08720.1"/>
    <property type="molecule type" value="mRNA"/>
</dbReference>
<dbReference type="CCDS" id="CCDS2593.1">
    <molecule id="Q96HD1-1"/>
</dbReference>
<dbReference type="CCDS" id="CCDS33693.1">
    <molecule id="Q96HD1-2"/>
</dbReference>
<dbReference type="PIR" id="T08724">
    <property type="entry name" value="T08724"/>
</dbReference>
<dbReference type="RefSeq" id="NP_001026887.2">
    <molecule id="Q96HD1-2"/>
    <property type="nucleotide sequence ID" value="NM_001031717.4"/>
</dbReference>
<dbReference type="RefSeq" id="NP_001070883.2">
    <molecule id="Q96HD1-1"/>
    <property type="nucleotide sequence ID" value="NM_001077415.3"/>
</dbReference>
<dbReference type="RefSeq" id="NP_001361245.1">
    <molecule id="Q96HD1-1"/>
    <property type="nucleotide sequence ID" value="NM_001374316.1"/>
</dbReference>
<dbReference type="RefSeq" id="NP_056328.2">
    <molecule id="Q96HD1-1"/>
    <property type="nucleotide sequence ID" value="NM_015513.4"/>
</dbReference>
<dbReference type="RefSeq" id="XP_016862664.1">
    <property type="nucleotide sequence ID" value="XM_017007175.1"/>
</dbReference>
<dbReference type="RefSeq" id="XP_047304854.1">
    <molecule id="Q96HD1-2"/>
    <property type="nucleotide sequence ID" value="XM_047448898.1"/>
</dbReference>
<dbReference type="BioGRID" id="122458">
    <property type="interactions" value="187"/>
</dbReference>
<dbReference type="FunCoup" id="Q96HD1">
    <property type="interactions" value="311"/>
</dbReference>
<dbReference type="IntAct" id="Q96HD1">
    <property type="interactions" value="159"/>
</dbReference>
<dbReference type="MINT" id="Q96HD1"/>
<dbReference type="STRING" id="9606.ENSP00000321856"/>
<dbReference type="GlyCosmos" id="Q96HD1">
    <property type="glycosylation" value="2 sites, No reported glycans"/>
</dbReference>
<dbReference type="GlyGen" id="Q96HD1">
    <property type="glycosylation" value="4 sites, 6 N-linked glycans (1 site), 1 O-linked glycan (2 sites)"/>
</dbReference>
<dbReference type="iPTMnet" id="Q96HD1"/>
<dbReference type="PhosphoSitePlus" id="Q96HD1"/>
<dbReference type="SwissPalm" id="Q96HD1"/>
<dbReference type="BioMuta" id="CRELD1"/>
<dbReference type="DMDM" id="209572751"/>
<dbReference type="jPOST" id="Q96HD1"/>
<dbReference type="MassIVE" id="Q96HD1"/>
<dbReference type="PaxDb" id="9606-ENSP00000321856"/>
<dbReference type="PeptideAtlas" id="Q96HD1"/>
<dbReference type="ProteomicsDB" id="76734">
    <molecule id="Q96HD1-1"/>
</dbReference>
<dbReference type="ProteomicsDB" id="76735">
    <molecule id="Q96HD1-2"/>
</dbReference>
<dbReference type="Pumba" id="Q96HD1"/>
<dbReference type="Antibodypedia" id="25846">
    <property type="antibodies" value="122 antibodies from 24 providers"/>
</dbReference>
<dbReference type="DNASU" id="78987"/>
<dbReference type="Ensembl" id="ENST00000326434.9">
    <molecule id="Q96HD1-2"/>
    <property type="protein sequence ID" value="ENSP00000321856.5"/>
    <property type="gene ID" value="ENSG00000163703.20"/>
</dbReference>
<dbReference type="Ensembl" id="ENST00000383811.8">
    <molecule id="Q96HD1-1"/>
    <property type="protein sequence ID" value="ENSP00000373322.3"/>
    <property type="gene ID" value="ENSG00000163703.20"/>
</dbReference>
<dbReference type="Ensembl" id="ENST00000452070.6">
    <molecule id="Q96HD1-1"/>
    <property type="protein sequence ID" value="ENSP00000393643.2"/>
    <property type="gene ID" value="ENSG00000163703.20"/>
</dbReference>
<dbReference type="Ensembl" id="ENST00000682783.1">
    <molecule id="Q96HD1-1"/>
    <property type="protein sequence ID" value="ENSP00000508358.1"/>
    <property type="gene ID" value="ENSG00000163703.20"/>
</dbReference>
<dbReference type="Ensembl" id="ENST00000684493.1">
    <molecule id="Q96HD1-1"/>
    <property type="protein sequence ID" value="ENSP00000507127.1"/>
    <property type="gene ID" value="ENSG00000163703.20"/>
</dbReference>
<dbReference type="GeneID" id="78987"/>
<dbReference type="KEGG" id="hsa:78987"/>
<dbReference type="MANE-Select" id="ENST00000452070.6">
    <property type="protein sequence ID" value="ENSP00000393643.2"/>
    <property type="RefSeq nucleotide sequence ID" value="NM_001077415.3"/>
    <property type="RefSeq protein sequence ID" value="NP_001070883.2"/>
</dbReference>
<dbReference type="UCSC" id="uc003buf.4">
    <molecule id="Q96HD1-1"/>
    <property type="organism name" value="human"/>
</dbReference>
<dbReference type="AGR" id="HGNC:14630"/>
<dbReference type="CTD" id="78987"/>
<dbReference type="DisGeNET" id="78987"/>
<dbReference type="GeneCards" id="CRELD1"/>
<dbReference type="HGNC" id="HGNC:14630">
    <property type="gene designation" value="CRELD1"/>
</dbReference>
<dbReference type="HPA" id="ENSG00000163703">
    <property type="expression patterns" value="Low tissue specificity"/>
</dbReference>
<dbReference type="MalaCards" id="CRELD1"/>
<dbReference type="MIM" id="606217">
    <property type="type" value="phenotype"/>
</dbReference>
<dbReference type="MIM" id="607170">
    <property type="type" value="gene"/>
</dbReference>
<dbReference type="MIM" id="620771">
    <property type="type" value="phenotype"/>
</dbReference>
<dbReference type="neXtProt" id="NX_Q96HD1"/>
<dbReference type="OpenTargets" id="ENSG00000163703"/>
<dbReference type="Orphanet" id="99067">
    <property type="disease" value="Complete atrioventricular septal defect with ventricular hypoplasia"/>
</dbReference>
<dbReference type="Orphanet" id="99068">
    <property type="disease" value="Complete atrioventricular septal defect-tetralogy of Fallot"/>
</dbReference>
<dbReference type="Orphanet" id="576235">
    <property type="disease" value="Partial atrioventricular septal defect without ventricular hypoplasia"/>
</dbReference>
<dbReference type="PharmGKB" id="PA26870"/>
<dbReference type="VEuPathDB" id="HostDB:ENSG00000163703"/>
<dbReference type="GeneTree" id="ENSGT00940000160255"/>
<dbReference type="HOGENOM" id="CLU_038974_1_1_1"/>
<dbReference type="InParanoid" id="Q96HD1"/>
<dbReference type="OMA" id="HCRANQY"/>
<dbReference type="OrthoDB" id="10045365at2759"/>
<dbReference type="PAN-GO" id="Q96HD1">
    <property type="GO annotations" value="0 GO annotations based on evolutionary models"/>
</dbReference>
<dbReference type="PhylomeDB" id="Q96HD1"/>
<dbReference type="TreeFam" id="TF316507"/>
<dbReference type="PathwayCommons" id="Q96HD1"/>
<dbReference type="SignaLink" id="Q96HD1"/>
<dbReference type="BioGRID-ORCS" id="78987">
    <property type="hits" value="26 hits in 1157 CRISPR screens"/>
</dbReference>
<dbReference type="ChiTaRS" id="CRELD1">
    <property type="organism name" value="human"/>
</dbReference>
<dbReference type="GeneWiki" id="CRELD1"/>
<dbReference type="GenomeRNAi" id="78987"/>
<dbReference type="Pharos" id="Q96HD1">
    <property type="development level" value="Tbio"/>
</dbReference>
<dbReference type="PRO" id="PR:Q96HD1"/>
<dbReference type="Proteomes" id="UP000005640">
    <property type="component" value="Chromosome 3"/>
</dbReference>
<dbReference type="RNAct" id="Q96HD1">
    <property type="molecule type" value="protein"/>
</dbReference>
<dbReference type="Bgee" id="ENSG00000163703">
    <property type="expression patterns" value="Expressed in right hemisphere of cerebellum and 98 other cell types or tissues"/>
</dbReference>
<dbReference type="ExpressionAtlas" id="Q96HD1">
    <property type="expression patterns" value="baseline and differential"/>
</dbReference>
<dbReference type="GO" id="GO:0062023">
    <property type="term" value="C:collagen-containing extracellular matrix"/>
    <property type="evidence" value="ECO:0007005"/>
    <property type="project" value="BHF-UCL"/>
</dbReference>
<dbReference type="GO" id="GO:0098978">
    <property type="term" value="C:glutamatergic synapse"/>
    <property type="evidence" value="ECO:0007669"/>
    <property type="project" value="Ensembl"/>
</dbReference>
<dbReference type="GO" id="GO:0016020">
    <property type="term" value="C:membrane"/>
    <property type="evidence" value="ECO:0007669"/>
    <property type="project" value="UniProtKB-SubCell"/>
</dbReference>
<dbReference type="GO" id="GO:0005509">
    <property type="term" value="F:calcium ion binding"/>
    <property type="evidence" value="ECO:0007669"/>
    <property type="project" value="InterPro"/>
</dbReference>
<dbReference type="GO" id="GO:0003756">
    <property type="term" value="F:protein disulfide isomerase activity"/>
    <property type="evidence" value="ECO:0007669"/>
    <property type="project" value="UniProtKB-EC"/>
</dbReference>
<dbReference type="GO" id="GO:0003279">
    <property type="term" value="P:cardiac septum development"/>
    <property type="evidence" value="ECO:0000304"/>
    <property type="project" value="BHF-UCL"/>
</dbReference>
<dbReference type="GO" id="GO:0003197">
    <property type="term" value="P:endocardial cushion development"/>
    <property type="evidence" value="ECO:0000304"/>
    <property type="project" value="BHF-UCL"/>
</dbReference>
<dbReference type="CDD" id="cd00054">
    <property type="entry name" value="EGF_CA"/>
    <property type="match status" value="2"/>
</dbReference>
<dbReference type="CDD" id="cd00064">
    <property type="entry name" value="FU"/>
    <property type="match status" value="1"/>
</dbReference>
<dbReference type="FunFam" id="2.10.25.10:FF:000611">
    <property type="entry name" value="Cysteine rich with EGF like domains 1"/>
    <property type="match status" value="1"/>
</dbReference>
<dbReference type="Gene3D" id="2.10.25.10">
    <property type="entry name" value="Laminin"/>
    <property type="match status" value="1"/>
</dbReference>
<dbReference type="Gene3D" id="2.90.20.10">
    <property type="entry name" value="Plasmodium vivax P25 domain"/>
    <property type="match status" value="1"/>
</dbReference>
<dbReference type="InterPro" id="IPR021852">
    <property type="entry name" value="DUF3456"/>
</dbReference>
<dbReference type="InterPro" id="IPR050751">
    <property type="entry name" value="ECM_structural_protein"/>
</dbReference>
<dbReference type="InterPro" id="IPR001881">
    <property type="entry name" value="EGF-like_Ca-bd_dom"/>
</dbReference>
<dbReference type="InterPro" id="IPR000742">
    <property type="entry name" value="EGF-like_dom"/>
</dbReference>
<dbReference type="InterPro" id="IPR000152">
    <property type="entry name" value="EGF-type_Asp/Asn_hydroxyl_site"/>
</dbReference>
<dbReference type="InterPro" id="IPR018097">
    <property type="entry name" value="EGF_Ca-bd_CS"/>
</dbReference>
<dbReference type="InterPro" id="IPR006212">
    <property type="entry name" value="Furin_repeat"/>
</dbReference>
<dbReference type="InterPro" id="IPR009030">
    <property type="entry name" value="Growth_fac_rcpt_cys_sf"/>
</dbReference>
<dbReference type="InterPro" id="IPR002049">
    <property type="entry name" value="LE_dom"/>
</dbReference>
<dbReference type="InterPro" id="IPR049883">
    <property type="entry name" value="NOTCH1_EGF-like"/>
</dbReference>
<dbReference type="PANTHER" id="PTHR24034">
    <property type="entry name" value="EGF-LIKE DOMAIN-CONTAINING PROTEIN"/>
    <property type="match status" value="1"/>
</dbReference>
<dbReference type="PANTHER" id="PTHR24034:SF114">
    <property type="entry name" value="PROTEIN DISULFIDE ISOMERASE CRELD1"/>
    <property type="match status" value="1"/>
</dbReference>
<dbReference type="Pfam" id="PF11938">
    <property type="entry name" value="DUF3456"/>
    <property type="match status" value="2"/>
</dbReference>
<dbReference type="Pfam" id="PF07645">
    <property type="entry name" value="EGF_CA"/>
    <property type="match status" value="2"/>
</dbReference>
<dbReference type="SMART" id="SM00181">
    <property type="entry name" value="EGF"/>
    <property type="match status" value="4"/>
</dbReference>
<dbReference type="SMART" id="SM00179">
    <property type="entry name" value="EGF_CA"/>
    <property type="match status" value="2"/>
</dbReference>
<dbReference type="SMART" id="SM00261">
    <property type="entry name" value="FU"/>
    <property type="match status" value="2"/>
</dbReference>
<dbReference type="SUPFAM" id="SSF57184">
    <property type="entry name" value="Growth factor receptor domain"/>
    <property type="match status" value="1"/>
</dbReference>
<dbReference type="PROSITE" id="PS00010">
    <property type="entry name" value="ASX_HYDROXYL"/>
    <property type="match status" value="1"/>
</dbReference>
<dbReference type="PROSITE" id="PS00022">
    <property type="entry name" value="EGF_1"/>
    <property type="match status" value="1"/>
</dbReference>
<dbReference type="PROSITE" id="PS01186">
    <property type="entry name" value="EGF_2"/>
    <property type="match status" value="2"/>
</dbReference>
<dbReference type="PROSITE" id="PS50026">
    <property type="entry name" value="EGF_3"/>
    <property type="match status" value="2"/>
</dbReference>
<dbReference type="PROSITE" id="PS01187">
    <property type="entry name" value="EGF_CA"/>
    <property type="match status" value="2"/>
</dbReference>
<gene>
    <name type="primary">CRELD1</name>
    <name type="synonym">CIRRIN</name>
    <name type="ORF">UNQ188/PRO214</name>
</gene>
<evidence type="ECO:0000250" key="1">
    <source>
        <dbReference type="UniProtKB" id="Q19267"/>
    </source>
</evidence>
<evidence type="ECO:0000250" key="2">
    <source>
        <dbReference type="UniProtKB" id="Q91XD7"/>
    </source>
</evidence>
<evidence type="ECO:0000250" key="3">
    <source>
        <dbReference type="UniProtKB" id="Q9CYA0"/>
    </source>
</evidence>
<evidence type="ECO:0000255" key="4"/>
<evidence type="ECO:0000255" key="5">
    <source>
        <dbReference type="PROSITE-ProRule" id="PRU00076"/>
    </source>
</evidence>
<evidence type="ECO:0000269" key="6">
    <source>
    </source>
</evidence>
<evidence type="ECO:0000269" key="7">
    <source>
    </source>
</evidence>
<evidence type="ECO:0000269" key="8">
    <source>
    </source>
</evidence>
<evidence type="ECO:0000269" key="9">
    <source>
    </source>
</evidence>
<evidence type="ECO:0000269" key="10">
    <source>
    </source>
</evidence>
<evidence type="ECO:0000269" key="11">
    <source>
    </source>
</evidence>
<evidence type="ECO:0000269" key="12">
    <source>
    </source>
</evidence>
<evidence type="ECO:0000269" key="13">
    <source>
    </source>
</evidence>
<evidence type="ECO:0000269" key="14">
    <source>
    </source>
</evidence>
<evidence type="ECO:0000269" key="15">
    <source ref="5"/>
</evidence>
<evidence type="ECO:0000303" key="16">
    <source>
    </source>
</evidence>
<evidence type="ECO:0000303" key="17">
    <source ref="5"/>
</evidence>
<evidence type="ECO:0000305" key="18"/>
<organism>
    <name type="scientific">Homo sapiens</name>
    <name type="common">Human</name>
    <dbReference type="NCBI Taxonomy" id="9606"/>
    <lineage>
        <taxon>Eukaryota</taxon>
        <taxon>Metazoa</taxon>
        <taxon>Chordata</taxon>
        <taxon>Craniata</taxon>
        <taxon>Vertebrata</taxon>
        <taxon>Euteleostomi</taxon>
        <taxon>Mammalia</taxon>
        <taxon>Eutheria</taxon>
        <taxon>Euarchontoglires</taxon>
        <taxon>Primates</taxon>
        <taxon>Haplorrhini</taxon>
        <taxon>Catarrhini</taxon>
        <taxon>Hominidae</taxon>
        <taxon>Homo</taxon>
    </lineage>
</organism>
<sequence length="420" mass="45440">MAPWPPKGLVPAMLWGLSLFLNLPGPIWLQPSPPPQSSPPPQPHPCHTCRGLVDSFNKGLERTIRDNFGGGNTAWEEENLSKYKDSETRLVEVLEGVCSKSDFECHRLLELSEELVESWWFHKQQEAPDLFQWLCSDSLKLCCPAGTFGPSCLPCPGGTERPCGGYGQCEGEGTRGGSGHCDCQAGYGGEACGQCGLGYFEAERNASHLVCSACFGPCARCSGPEESNCLQCKKGWALHHLKCVDIDECGTEGANCGADQFCVNTEGSYECRDCAKACLGCMGAGPGRCKKCSPGYQQVGSKCLDVDECETEVCPGENKQCENTEGGYRCICAEGYKQMEGICVKEQIPESAGFFSEMTEDELVVLQQMFFGIIICALATLAAKGDLVFTAIFIGAVAAMTGYWLSERSDRVLEGFIKGR</sequence>
<proteinExistence type="evidence at protein level"/>
<keyword id="KW-0025">Alternative splicing</keyword>
<keyword id="KW-0106">Calcium</keyword>
<keyword id="KW-0225">Disease variant</keyword>
<keyword id="KW-1015">Disulfide bond</keyword>
<keyword id="KW-0245">EGF-like domain</keyword>
<keyword id="KW-0887">Epilepsy</keyword>
<keyword id="KW-0325">Glycoprotein</keyword>
<keyword id="KW-0991">Intellectual disability</keyword>
<keyword id="KW-0413">Isomerase</keyword>
<keyword id="KW-0472">Membrane</keyword>
<keyword id="KW-1267">Proteomics identification</keyword>
<keyword id="KW-0676">Redox-active center</keyword>
<keyword id="KW-1185">Reference proteome</keyword>
<keyword id="KW-0677">Repeat</keyword>
<keyword id="KW-0732">Signal</keyword>
<keyword id="KW-0812">Transmembrane</keyword>
<keyword id="KW-1133">Transmembrane helix</keyword>
<protein>
    <recommendedName>
        <fullName evidence="18">Protein disulfide isomerase CRELD1</fullName>
        <ecNumber evidence="3">5.3.4.1</ecNumber>
    </recommendedName>
    <alternativeName>
        <fullName evidence="18">Cysteine-rich with EGF-like domain protein 1</fullName>
    </alternativeName>
</protein>
<name>CREL1_HUMAN</name>
<accession>Q96HD1</accession>
<accession>A8MX90</accession>
<accession>B2RAA9</accession>
<accession>Q6I9X5</accession>
<accession>Q8NFT4</accession>
<accession>Q9Y409</accession>